<organism>
    <name type="scientific">Rickettsia canadensis (strain McKiel)</name>
    <dbReference type="NCBI Taxonomy" id="293613"/>
    <lineage>
        <taxon>Bacteria</taxon>
        <taxon>Pseudomonadati</taxon>
        <taxon>Pseudomonadota</taxon>
        <taxon>Alphaproteobacteria</taxon>
        <taxon>Rickettsiales</taxon>
        <taxon>Rickettsiaceae</taxon>
        <taxon>Rickettsieae</taxon>
        <taxon>Rickettsia</taxon>
        <taxon>belli group</taxon>
    </lineage>
</organism>
<proteinExistence type="inferred from homology"/>
<accession>A8EYF7</accession>
<evidence type="ECO:0000255" key="1">
    <source>
        <dbReference type="HAMAP-Rule" id="MF_00201"/>
    </source>
</evidence>
<name>RECO_RICCK</name>
<gene>
    <name evidence="1" type="primary">recO</name>
    <name type="ordered locus">A1E_02225</name>
</gene>
<feature type="chain" id="PRO_1000193419" description="DNA repair protein RecO">
    <location>
        <begin position="1"/>
        <end position="241"/>
    </location>
</feature>
<sequence length="241" mass="28232">MNIKDIGVIVAKKPLKENTFIITVFTKNYGLYSGVVKASSKKSKFIYQEGNIVDFLWMARLHEHIGIAKCELIKSYTGYFITNKTKLYAFNSIISLIKELLHEREEYSNFFSFLINYLDNLSKKFFFRDYINFELALLDIAGYKLDLSKCAVSNVKQDLYYVSPKSGRALSYEVGKPYKDKLLILPKFLLSDNSKITLEEKRQALTLTNYFFNRYLFHNNRHAEARQAFMEYILHRCHPAT</sequence>
<protein>
    <recommendedName>
        <fullName evidence="1">DNA repair protein RecO</fullName>
    </recommendedName>
    <alternativeName>
        <fullName evidence="1">Recombination protein O</fullName>
    </alternativeName>
</protein>
<keyword id="KW-0227">DNA damage</keyword>
<keyword id="KW-0233">DNA recombination</keyword>
<keyword id="KW-0234">DNA repair</keyword>
<dbReference type="EMBL" id="CP000409">
    <property type="protein sequence ID" value="ABV73390.1"/>
    <property type="molecule type" value="Genomic_DNA"/>
</dbReference>
<dbReference type="RefSeq" id="WP_012148588.1">
    <property type="nucleotide sequence ID" value="NC_009879.1"/>
</dbReference>
<dbReference type="SMR" id="A8EYF7"/>
<dbReference type="STRING" id="293613.A1E_02225"/>
<dbReference type="KEGG" id="rcm:A1E_02225"/>
<dbReference type="eggNOG" id="COG1381">
    <property type="taxonomic scope" value="Bacteria"/>
</dbReference>
<dbReference type="HOGENOM" id="CLU_086029_0_0_5"/>
<dbReference type="Proteomes" id="UP000007056">
    <property type="component" value="Chromosome"/>
</dbReference>
<dbReference type="GO" id="GO:0043590">
    <property type="term" value="C:bacterial nucleoid"/>
    <property type="evidence" value="ECO:0007669"/>
    <property type="project" value="TreeGrafter"/>
</dbReference>
<dbReference type="GO" id="GO:0006310">
    <property type="term" value="P:DNA recombination"/>
    <property type="evidence" value="ECO:0007669"/>
    <property type="project" value="UniProtKB-UniRule"/>
</dbReference>
<dbReference type="GO" id="GO:0006302">
    <property type="term" value="P:double-strand break repair"/>
    <property type="evidence" value="ECO:0007669"/>
    <property type="project" value="TreeGrafter"/>
</dbReference>
<dbReference type="Gene3D" id="2.40.50.140">
    <property type="entry name" value="Nucleic acid-binding proteins"/>
    <property type="match status" value="1"/>
</dbReference>
<dbReference type="Gene3D" id="1.20.1440.120">
    <property type="entry name" value="Recombination protein O, C-terminal domain"/>
    <property type="match status" value="1"/>
</dbReference>
<dbReference type="HAMAP" id="MF_00201">
    <property type="entry name" value="RecO"/>
    <property type="match status" value="1"/>
</dbReference>
<dbReference type="InterPro" id="IPR037278">
    <property type="entry name" value="ARFGAP/RecO"/>
</dbReference>
<dbReference type="InterPro" id="IPR022572">
    <property type="entry name" value="DNA_rep/recomb_RecO_N"/>
</dbReference>
<dbReference type="InterPro" id="IPR012340">
    <property type="entry name" value="NA-bd_OB-fold"/>
</dbReference>
<dbReference type="InterPro" id="IPR003717">
    <property type="entry name" value="RecO"/>
</dbReference>
<dbReference type="InterPro" id="IPR042242">
    <property type="entry name" value="RecO_C"/>
</dbReference>
<dbReference type="NCBIfam" id="TIGR00613">
    <property type="entry name" value="reco"/>
    <property type="match status" value="1"/>
</dbReference>
<dbReference type="PANTHER" id="PTHR33991">
    <property type="entry name" value="DNA REPAIR PROTEIN RECO"/>
    <property type="match status" value="1"/>
</dbReference>
<dbReference type="PANTHER" id="PTHR33991:SF1">
    <property type="entry name" value="DNA REPAIR PROTEIN RECO"/>
    <property type="match status" value="1"/>
</dbReference>
<dbReference type="Pfam" id="PF02565">
    <property type="entry name" value="RecO_C"/>
    <property type="match status" value="1"/>
</dbReference>
<dbReference type="Pfam" id="PF11967">
    <property type="entry name" value="RecO_N"/>
    <property type="match status" value="1"/>
</dbReference>
<dbReference type="SUPFAM" id="SSF57863">
    <property type="entry name" value="ArfGap/RecO-like zinc finger"/>
    <property type="match status" value="1"/>
</dbReference>
<comment type="function">
    <text evidence="1">Involved in DNA repair and RecF pathway recombination.</text>
</comment>
<comment type="similarity">
    <text evidence="1">Belongs to the RecO family.</text>
</comment>
<reference key="1">
    <citation type="submission" date="2007-09" db="EMBL/GenBank/DDBJ databases">
        <title>Complete genome sequence of Rickettsia canadensis.</title>
        <authorList>
            <person name="Madan A."/>
            <person name="Fahey J."/>
            <person name="Helton E."/>
            <person name="Ketteman M."/>
            <person name="Madan A."/>
            <person name="Rodrigues S."/>
            <person name="Sanchez A."/>
            <person name="Whiting M."/>
            <person name="Dasch G."/>
            <person name="Eremeeva M."/>
        </authorList>
    </citation>
    <scope>NUCLEOTIDE SEQUENCE [LARGE SCALE GENOMIC DNA]</scope>
    <source>
        <strain>McKiel</strain>
    </source>
</reference>